<sequence length="149" mass="17974">MKLTDYVKQVSLEDFGRAFIHHVQWNRRLRSTGGRFFPKDGHLDFNPKVYQKLGMEVFRKIVRHELCHYHLYFQGKGYQHKDRDFKELLKAVDGLRFVPSLPNSNSKPLKLYRCQSCQQRYQRKRRIDTKRYRCGLCRGKLLLINQPED</sequence>
<comment type="cofactor">
    <cofactor evidence="1">
        <name>Zn(2+)</name>
        <dbReference type="ChEBI" id="CHEBI:29105"/>
    </cofactor>
    <text evidence="1">Binds 1 zinc ion.</text>
</comment>
<comment type="subcellular location">
    <subcellularLocation>
        <location evidence="1">Cytoplasm</location>
    </subcellularLocation>
</comment>
<comment type="similarity">
    <text evidence="1">Belongs to the SprT family.</text>
</comment>
<gene>
    <name type="ordered locus">spr0809</name>
</gene>
<feature type="chain" id="PRO_0000213309" description="Protein SprT-like">
    <location>
        <begin position="1"/>
        <end position="149"/>
    </location>
</feature>
<feature type="domain" description="SprT-like" evidence="1">
    <location>
        <begin position="5"/>
        <end position="143"/>
    </location>
</feature>
<feature type="active site" evidence="1">
    <location>
        <position position="65"/>
    </location>
</feature>
<feature type="binding site" evidence="1">
    <location>
        <position position="64"/>
    </location>
    <ligand>
        <name>Zn(2+)</name>
        <dbReference type="ChEBI" id="CHEBI:29105"/>
    </ligand>
</feature>
<feature type="binding site" evidence="1">
    <location>
        <position position="68"/>
    </location>
    <ligand>
        <name>Zn(2+)</name>
        <dbReference type="ChEBI" id="CHEBI:29105"/>
    </ligand>
</feature>
<organism>
    <name type="scientific">Streptococcus pneumoniae (strain ATCC BAA-255 / R6)</name>
    <dbReference type="NCBI Taxonomy" id="171101"/>
    <lineage>
        <taxon>Bacteria</taxon>
        <taxon>Bacillati</taxon>
        <taxon>Bacillota</taxon>
        <taxon>Bacilli</taxon>
        <taxon>Lactobacillales</taxon>
        <taxon>Streptococcaceae</taxon>
        <taxon>Streptococcus</taxon>
    </lineage>
</organism>
<keyword id="KW-0963">Cytoplasm</keyword>
<keyword id="KW-0479">Metal-binding</keyword>
<keyword id="KW-1185">Reference proteome</keyword>
<keyword id="KW-0862">Zinc</keyword>
<name>SPRTL_STRR6</name>
<dbReference type="EMBL" id="AE007317">
    <property type="protein sequence ID" value="AAK99613.1"/>
    <property type="molecule type" value="Genomic_DNA"/>
</dbReference>
<dbReference type="PIR" id="A97973">
    <property type="entry name" value="A97973"/>
</dbReference>
<dbReference type="RefSeq" id="NP_358403.1">
    <property type="nucleotide sequence ID" value="NC_003098.1"/>
</dbReference>
<dbReference type="RefSeq" id="WP_000778576.1">
    <property type="nucleotide sequence ID" value="NC_003098.1"/>
</dbReference>
<dbReference type="STRING" id="171101.spr0809"/>
<dbReference type="KEGG" id="spr:spr0809"/>
<dbReference type="PATRIC" id="fig|171101.6.peg.899"/>
<dbReference type="eggNOG" id="COG3091">
    <property type="taxonomic scope" value="Bacteria"/>
</dbReference>
<dbReference type="HOGENOM" id="CLU_123820_0_0_9"/>
<dbReference type="Proteomes" id="UP000000586">
    <property type="component" value="Chromosome"/>
</dbReference>
<dbReference type="GO" id="GO:0005737">
    <property type="term" value="C:cytoplasm"/>
    <property type="evidence" value="ECO:0007669"/>
    <property type="project" value="UniProtKB-SubCell"/>
</dbReference>
<dbReference type="GO" id="GO:0008270">
    <property type="term" value="F:zinc ion binding"/>
    <property type="evidence" value="ECO:0007669"/>
    <property type="project" value="UniProtKB-UniRule"/>
</dbReference>
<dbReference type="GO" id="GO:0006950">
    <property type="term" value="P:response to stress"/>
    <property type="evidence" value="ECO:0007669"/>
    <property type="project" value="UniProtKB-ARBA"/>
</dbReference>
<dbReference type="HAMAP" id="MF_00745">
    <property type="entry name" value="SprT_like"/>
    <property type="match status" value="1"/>
</dbReference>
<dbReference type="InterPro" id="IPR006640">
    <property type="entry name" value="SprT-like_domain"/>
</dbReference>
<dbReference type="InterPro" id="IPR035240">
    <property type="entry name" value="SprT_Zn_ribbon"/>
</dbReference>
<dbReference type="InterPro" id="IPR023524">
    <property type="entry name" value="Uncharacterised_SprT-like"/>
</dbReference>
<dbReference type="NCBIfam" id="NF003339">
    <property type="entry name" value="PRK04351.1"/>
    <property type="match status" value="1"/>
</dbReference>
<dbReference type="Pfam" id="PF10263">
    <property type="entry name" value="SprT-like"/>
    <property type="match status" value="1"/>
</dbReference>
<dbReference type="Pfam" id="PF17283">
    <property type="entry name" value="Zn_ribbon_SprT"/>
    <property type="match status" value="1"/>
</dbReference>
<dbReference type="SMART" id="SM00731">
    <property type="entry name" value="SprT"/>
    <property type="match status" value="1"/>
</dbReference>
<reference key="1">
    <citation type="journal article" date="2001" name="J. Bacteriol.">
        <title>Genome of the bacterium Streptococcus pneumoniae strain R6.</title>
        <authorList>
            <person name="Hoskins J."/>
            <person name="Alborn W.E. Jr."/>
            <person name="Arnold J."/>
            <person name="Blaszczak L.C."/>
            <person name="Burgett S."/>
            <person name="DeHoff B.S."/>
            <person name="Estrem S.T."/>
            <person name="Fritz L."/>
            <person name="Fu D.-J."/>
            <person name="Fuller W."/>
            <person name="Geringer C."/>
            <person name="Gilmour R."/>
            <person name="Glass J.S."/>
            <person name="Khoja H."/>
            <person name="Kraft A.R."/>
            <person name="Lagace R.E."/>
            <person name="LeBlanc D.J."/>
            <person name="Lee L.N."/>
            <person name="Lefkowitz E.J."/>
            <person name="Lu J."/>
            <person name="Matsushima P."/>
            <person name="McAhren S.M."/>
            <person name="McHenney M."/>
            <person name="McLeaster K."/>
            <person name="Mundy C.W."/>
            <person name="Nicas T.I."/>
            <person name="Norris F.H."/>
            <person name="O'Gara M."/>
            <person name="Peery R.B."/>
            <person name="Robertson G.T."/>
            <person name="Rockey P."/>
            <person name="Sun P.-M."/>
            <person name="Winkler M.E."/>
            <person name="Yang Y."/>
            <person name="Young-Bellido M."/>
            <person name="Zhao G."/>
            <person name="Zook C.A."/>
            <person name="Baltz R.H."/>
            <person name="Jaskunas S.R."/>
            <person name="Rosteck P.R. Jr."/>
            <person name="Skatrud P.L."/>
            <person name="Glass J.I."/>
        </authorList>
    </citation>
    <scope>NUCLEOTIDE SEQUENCE [LARGE SCALE GENOMIC DNA]</scope>
    <source>
        <strain>ATCC BAA-255 / R6</strain>
    </source>
</reference>
<evidence type="ECO:0000255" key="1">
    <source>
        <dbReference type="HAMAP-Rule" id="MF_00745"/>
    </source>
</evidence>
<protein>
    <recommendedName>
        <fullName evidence="1">Protein SprT-like</fullName>
    </recommendedName>
</protein>
<accession>Q8DQ78</accession>
<proteinExistence type="inferred from homology"/>